<keyword id="KW-0067">ATP-binding</keyword>
<keyword id="KW-1070">Brassinosteroid signaling pathway</keyword>
<keyword id="KW-1003">Cell membrane</keyword>
<keyword id="KW-0418">Kinase</keyword>
<keyword id="KW-0449">Lipoprotein</keyword>
<keyword id="KW-0472">Membrane</keyword>
<keyword id="KW-0519">Myristate</keyword>
<keyword id="KW-0547">Nucleotide-binding</keyword>
<keyword id="KW-0597">Phosphoprotein</keyword>
<keyword id="KW-1185">Reference proteome</keyword>
<keyword id="KW-0723">Serine/threonine-protein kinase</keyword>
<keyword id="KW-0808">Transferase</keyword>
<accession>Q0WRY5</accession>
<accession>Q9LZ05</accession>
<protein>
    <recommendedName>
        <fullName evidence="9">Probable serine/threonine-protein kinase PBL7</fullName>
        <ecNumber evidence="6">2.7.11.1</ecNumber>
    </recommendedName>
    <alternativeName>
        <fullName evidence="8">CDG1-like protein 1</fullName>
    </alternativeName>
    <alternativeName>
        <fullName evidence="7">PBS1-like protein 7</fullName>
    </alternativeName>
</protein>
<comment type="function">
    <text evidence="6">Serine/threonine-protein kinase involved in the positive regulation of brassinosteroid (BR) signaling and plant growth. Phosphorylates both BSU1 and BSL1 in vitro.</text>
</comment>
<comment type="catalytic activity">
    <reaction evidence="6">
        <text>L-seryl-[protein] + ATP = O-phospho-L-seryl-[protein] + ADP + H(+)</text>
        <dbReference type="Rhea" id="RHEA:17989"/>
        <dbReference type="Rhea" id="RHEA-COMP:9863"/>
        <dbReference type="Rhea" id="RHEA-COMP:11604"/>
        <dbReference type="ChEBI" id="CHEBI:15378"/>
        <dbReference type="ChEBI" id="CHEBI:29999"/>
        <dbReference type="ChEBI" id="CHEBI:30616"/>
        <dbReference type="ChEBI" id="CHEBI:83421"/>
        <dbReference type="ChEBI" id="CHEBI:456216"/>
        <dbReference type="EC" id="2.7.11.1"/>
    </reaction>
</comment>
<comment type="catalytic activity">
    <reaction evidence="6">
        <text>L-threonyl-[protein] + ATP = O-phospho-L-threonyl-[protein] + ADP + H(+)</text>
        <dbReference type="Rhea" id="RHEA:46608"/>
        <dbReference type="Rhea" id="RHEA-COMP:11060"/>
        <dbReference type="Rhea" id="RHEA-COMP:11605"/>
        <dbReference type="ChEBI" id="CHEBI:15378"/>
        <dbReference type="ChEBI" id="CHEBI:30013"/>
        <dbReference type="ChEBI" id="CHEBI:30616"/>
        <dbReference type="ChEBI" id="CHEBI:61977"/>
        <dbReference type="ChEBI" id="CHEBI:456216"/>
        <dbReference type="EC" id="2.7.11.1"/>
    </reaction>
</comment>
<comment type="subunit">
    <text evidence="6">Interacts with BSU1 and BSL1.</text>
</comment>
<comment type="subcellular location">
    <subcellularLocation>
        <location evidence="6">Cell membrane</location>
        <topology evidence="1">Lipid-anchor</topology>
    </subcellularLocation>
</comment>
<comment type="tissue specificity">
    <text evidence="6">Widely expressed.</text>
</comment>
<comment type="PTM">
    <text evidence="3">Phosphorylated at Ser-43, Ser-46 and Ser-234.</text>
</comment>
<comment type="disruption phenotype">
    <text evidence="6">No visible phenotype under normal growth conditions, but mutant plants have reduced sensitivity to BR and enhanced sensitivity to BR biosynthetic inhibitor brassinazole (BRZ).</text>
</comment>
<comment type="similarity">
    <text evidence="9">Belongs to the protein kinase superfamily. Ser/Thr protein kinase family.</text>
</comment>
<comment type="sequence caution" evidence="9">
    <conflict type="erroneous gene model prediction">
        <sequence resource="EMBL-CDS" id="CAB86034"/>
    </conflict>
</comment>
<organism>
    <name type="scientific">Arabidopsis thaliana</name>
    <name type="common">Mouse-ear cress</name>
    <dbReference type="NCBI Taxonomy" id="3702"/>
    <lineage>
        <taxon>Eukaryota</taxon>
        <taxon>Viridiplantae</taxon>
        <taxon>Streptophyta</taxon>
        <taxon>Embryophyta</taxon>
        <taxon>Tracheophyta</taxon>
        <taxon>Spermatophyta</taxon>
        <taxon>Magnoliopsida</taxon>
        <taxon>eudicotyledons</taxon>
        <taxon>Gunneridae</taxon>
        <taxon>Pentapetalae</taxon>
        <taxon>rosids</taxon>
        <taxon>malvids</taxon>
        <taxon>Brassicales</taxon>
        <taxon>Brassicaceae</taxon>
        <taxon>Camelineae</taxon>
        <taxon>Arabidopsis</taxon>
    </lineage>
</organism>
<proteinExistence type="evidence at protein level"/>
<name>PBL7_ARATH</name>
<sequence>MGWIPCSGKSSGRNKTRRNGDHKLDRKSSDCSVSTSEKSRAKSSLSESKSKGSDHIVAQTFTFSELATATRNFRKECLIGEGGFGRVYKGYLASTSQTAAIKQLDHNGLQGNREFLVEVLMLSLLHHPNLVNLIGYCADGDQRLLVYEYMPLGSLEDHLHDISPGKQPLDWNTRMKIAAGAAKGLEYLHDKTMPPVIYRDLKCSNILLDDDYFPKLSDFGLAKLGPVGDKSHVSTRVMGTYGYCAPEYAMTGQLTLKSDVYSFGVVLLEIITGRKAIDSSRSTGEQNLVAWARPLFKDRRKFSQMADPMLQGQYPPRGLYQALAVAAMCVQEQPNLRPLIADVVTALSYLASQKFDPLAQPVQGSLFAPGTPPRSKRV</sequence>
<evidence type="ECO:0000250" key="1">
    <source>
        <dbReference type="UniProtKB" id="O48814"/>
    </source>
</evidence>
<evidence type="ECO:0000250" key="2">
    <source>
        <dbReference type="UniProtKB" id="Q9FE20"/>
    </source>
</evidence>
<evidence type="ECO:0000250" key="3">
    <source>
        <dbReference type="UniProtKB" id="Q9LSE1"/>
    </source>
</evidence>
<evidence type="ECO:0000255" key="4">
    <source>
        <dbReference type="PROSITE-ProRule" id="PRU00159"/>
    </source>
</evidence>
<evidence type="ECO:0000256" key="5">
    <source>
        <dbReference type="SAM" id="MobiDB-lite"/>
    </source>
</evidence>
<evidence type="ECO:0000269" key="6">
    <source>
    </source>
</evidence>
<evidence type="ECO:0000303" key="7">
    <source>
    </source>
</evidence>
<evidence type="ECO:0000303" key="8">
    <source>
    </source>
</evidence>
<evidence type="ECO:0000305" key="9"/>
<evidence type="ECO:0000312" key="10">
    <source>
        <dbReference type="Araport" id="AT5G02800"/>
    </source>
</evidence>
<evidence type="ECO:0000312" key="11">
    <source>
        <dbReference type="EMBL" id="CAB86034.1"/>
    </source>
</evidence>
<dbReference type="EC" id="2.7.11.1" evidence="6"/>
<dbReference type="EMBL" id="AL162973">
    <property type="protein sequence ID" value="CAB86034.1"/>
    <property type="status" value="ALT_SEQ"/>
    <property type="molecule type" value="Genomic_DNA"/>
</dbReference>
<dbReference type="EMBL" id="CP002688">
    <property type="protein sequence ID" value="AED90519.1"/>
    <property type="molecule type" value="Genomic_DNA"/>
</dbReference>
<dbReference type="EMBL" id="AK228158">
    <property type="protein sequence ID" value="BAF00114.1"/>
    <property type="molecule type" value="mRNA"/>
</dbReference>
<dbReference type="PIR" id="T48301">
    <property type="entry name" value="T48301"/>
</dbReference>
<dbReference type="RefSeq" id="NP_195900.2">
    <property type="nucleotide sequence ID" value="NM_120358.5"/>
</dbReference>
<dbReference type="SMR" id="Q0WRY5"/>
<dbReference type="BioGRID" id="16562">
    <property type="interactions" value="3"/>
</dbReference>
<dbReference type="FunCoup" id="Q0WRY5">
    <property type="interactions" value="3792"/>
</dbReference>
<dbReference type="IntAct" id="Q0WRY5">
    <property type="interactions" value="1"/>
</dbReference>
<dbReference type="STRING" id="3702.Q0WRY5"/>
<dbReference type="iPTMnet" id="Q0WRY5"/>
<dbReference type="PaxDb" id="3702-AT5G02800.1"/>
<dbReference type="ProteomicsDB" id="236708"/>
<dbReference type="EnsemblPlants" id="AT5G02800.1">
    <property type="protein sequence ID" value="AT5G02800.1"/>
    <property type="gene ID" value="AT5G02800"/>
</dbReference>
<dbReference type="GeneID" id="831285"/>
<dbReference type="Gramene" id="AT5G02800.1">
    <property type="protein sequence ID" value="AT5G02800.1"/>
    <property type="gene ID" value="AT5G02800"/>
</dbReference>
<dbReference type="KEGG" id="ath:AT5G02800"/>
<dbReference type="Araport" id="AT5G02800"/>
<dbReference type="TAIR" id="AT5G02800">
    <property type="gene designation" value="CDL1"/>
</dbReference>
<dbReference type="eggNOG" id="KOG1187">
    <property type="taxonomic scope" value="Eukaryota"/>
</dbReference>
<dbReference type="HOGENOM" id="CLU_000288_21_4_1"/>
<dbReference type="InParanoid" id="Q0WRY5"/>
<dbReference type="OMA" id="NSRWTPA"/>
<dbReference type="OrthoDB" id="4062651at2759"/>
<dbReference type="PhylomeDB" id="Q0WRY5"/>
<dbReference type="PRO" id="PR:Q0WRY5"/>
<dbReference type="Proteomes" id="UP000006548">
    <property type="component" value="Chromosome 5"/>
</dbReference>
<dbReference type="ExpressionAtlas" id="Q0WRY5">
    <property type="expression patterns" value="baseline and differential"/>
</dbReference>
<dbReference type="GO" id="GO:0005886">
    <property type="term" value="C:plasma membrane"/>
    <property type="evidence" value="ECO:0000314"/>
    <property type="project" value="TAIR"/>
</dbReference>
<dbReference type="GO" id="GO:0005524">
    <property type="term" value="F:ATP binding"/>
    <property type="evidence" value="ECO:0007669"/>
    <property type="project" value="UniProtKB-KW"/>
</dbReference>
<dbReference type="GO" id="GO:0106310">
    <property type="term" value="F:protein serine kinase activity"/>
    <property type="evidence" value="ECO:0007669"/>
    <property type="project" value="RHEA"/>
</dbReference>
<dbReference type="GO" id="GO:0004674">
    <property type="term" value="F:protein serine/threonine kinase activity"/>
    <property type="evidence" value="ECO:0007669"/>
    <property type="project" value="UniProtKB-KW"/>
</dbReference>
<dbReference type="GO" id="GO:0009742">
    <property type="term" value="P:brassinosteroid mediated signaling pathway"/>
    <property type="evidence" value="ECO:0007669"/>
    <property type="project" value="UniProtKB-KW"/>
</dbReference>
<dbReference type="GO" id="GO:1900459">
    <property type="term" value="P:positive regulation of brassinosteroid mediated signaling pathway"/>
    <property type="evidence" value="ECO:0000315"/>
    <property type="project" value="TAIR"/>
</dbReference>
<dbReference type="GO" id="GO:0006468">
    <property type="term" value="P:protein phosphorylation"/>
    <property type="evidence" value="ECO:0000314"/>
    <property type="project" value="UniProtKB"/>
</dbReference>
<dbReference type="CDD" id="cd14066">
    <property type="entry name" value="STKc_IRAK"/>
    <property type="match status" value="1"/>
</dbReference>
<dbReference type="FunFam" id="1.10.510.10:FF:000032">
    <property type="entry name" value="Serine/threonine-protein kinase PBS1"/>
    <property type="match status" value="1"/>
</dbReference>
<dbReference type="FunFam" id="3.30.200.20:FF:000186">
    <property type="entry name" value="Serine/threonine-protein kinase PBS1"/>
    <property type="match status" value="1"/>
</dbReference>
<dbReference type="Gene3D" id="3.30.200.20">
    <property type="entry name" value="Phosphorylase Kinase, domain 1"/>
    <property type="match status" value="1"/>
</dbReference>
<dbReference type="Gene3D" id="1.10.510.10">
    <property type="entry name" value="Transferase(Phosphotransferase) domain 1"/>
    <property type="match status" value="1"/>
</dbReference>
<dbReference type="InterPro" id="IPR011009">
    <property type="entry name" value="Kinase-like_dom_sf"/>
</dbReference>
<dbReference type="InterPro" id="IPR000719">
    <property type="entry name" value="Prot_kinase_dom"/>
</dbReference>
<dbReference type="InterPro" id="IPR017441">
    <property type="entry name" value="Protein_kinase_ATP_BS"/>
</dbReference>
<dbReference type="InterPro" id="IPR001245">
    <property type="entry name" value="Ser-Thr/Tyr_kinase_cat_dom"/>
</dbReference>
<dbReference type="InterPro" id="IPR008271">
    <property type="entry name" value="Ser/Thr_kinase_AS"/>
</dbReference>
<dbReference type="PANTHER" id="PTHR47985">
    <property type="entry name" value="OS07G0668900 PROTEIN"/>
    <property type="match status" value="1"/>
</dbReference>
<dbReference type="PANTHER" id="PTHR47985:SF2">
    <property type="entry name" value="SERINE_THREONINE-PROTEIN KINASE PBL7-RELATED"/>
    <property type="match status" value="1"/>
</dbReference>
<dbReference type="Pfam" id="PF07714">
    <property type="entry name" value="PK_Tyr_Ser-Thr"/>
    <property type="match status" value="1"/>
</dbReference>
<dbReference type="SMART" id="SM00220">
    <property type="entry name" value="S_TKc"/>
    <property type="match status" value="1"/>
</dbReference>
<dbReference type="SUPFAM" id="SSF56112">
    <property type="entry name" value="Protein kinase-like (PK-like)"/>
    <property type="match status" value="1"/>
</dbReference>
<dbReference type="PROSITE" id="PS00107">
    <property type="entry name" value="PROTEIN_KINASE_ATP"/>
    <property type="match status" value="1"/>
</dbReference>
<dbReference type="PROSITE" id="PS50011">
    <property type="entry name" value="PROTEIN_KINASE_DOM"/>
    <property type="match status" value="1"/>
</dbReference>
<dbReference type="PROSITE" id="PS00108">
    <property type="entry name" value="PROTEIN_KINASE_ST"/>
    <property type="match status" value="1"/>
</dbReference>
<gene>
    <name evidence="7" type="primary">PBL7</name>
    <name evidence="8" type="synonym">CDL1</name>
    <name evidence="10" type="ordered locus">At5g02800</name>
    <name evidence="11" type="ORF">F9G14.110</name>
</gene>
<reference key="1">
    <citation type="journal article" date="2000" name="Nature">
        <title>Sequence and analysis of chromosome 5 of the plant Arabidopsis thaliana.</title>
        <authorList>
            <person name="Tabata S."/>
            <person name="Kaneko T."/>
            <person name="Nakamura Y."/>
            <person name="Kotani H."/>
            <person name="Kato T."/>
            <person name="Asamizu E."/>
            <person name="Miyajima N."/>
            <person name="Sasamoto S."/>
            <person name="Kimura T."/>
            <person name="Hosouchi T."/>
            <person name="Kawashima K."/>
            <person name="Kohara M."/>
            <person name="Matsumoto M."/>
            <person name="Matsuno A."/>
            <person name="Muraki A."/>
            <person name="Nakayama S."/>
            <person name="Nakazaki N."/>
            <person name="Naruo K."/>
            <person name="Okumura S."/>
            <person name="Shinpo S."/>
            <person name="Takeuchi C."/>
            <person name="Wada T."/>
            <person name="Watanabe A."/>
            <person name="Yamada M."/>
            <person name="Yasuda M."/>
            <person name="Sato S."/>
            <person name="de la Bastide M."/>
            <person name="Huang E."/>
            <person name="Spiegel L."/>
            <person name="Gnoj L."/>
            <person name="O'Shaughnessy A."/>
            <person name="Preston R."/>
            <person name="Habermann K."/>
            <person name="Murray J."/>
            <person name="Johnson D."/>
            <person name="Rohlfing T."/>
            <person name="Nelson J."/>
            <person name="Stoneking T."/>
            <person name="Pepin K."/>
            <person name="Spieth J."/>
            <person name="Sekhon M."/>
            <person name="Armstrong J."/>
            <person name="Becker M."/>
            <person name="Belter E."/>
            <person name="Cordum H."/>
            <person name="Cordes M."/>
            <person name="Courtney L."/>
            <person name="Courtney W."/>
            <person name="Dante M."/>
            <person name="Du H."/>
            <person name="Edwards J."/>
            <person name="Fryman J."/>
            <person name="Haakensen B."/>
            <person name="Lamar E."/>
            <person name="Latreille P."/>
            <person name="Leonard S."/>
            <person name="Meyer R."/>
            <person name="Mulvaney E."/>
            <person name="Ozersky P."/>
            <person name="Riley A."/>
            <person name="Strowmatt C."/>
            <person name="Wagner-McPherson C."/>
            <person name="Wollam A."/>
            <person name="Yoakum M."/>
            <person name="Bell M."/>
            <person name="Dedhia N."/>
            <person name="Parnell L."/>
            <person name="Shah R."/>
            <person name="Rodriguez M."/>
            <person name="Hoon See L."/>
            <person name="Vil D."/>
            <person name="Baker J."/>
            <person name="Kirchoff K."/>
            <person name="Toth K."/>
            <person name="King L."/>
            <person name="Bahret A."/>
            <person name="Miller B."/>
            <person name="Marra M.A."/>
            <person name="Martienssen R."/>
            <person name="McCombie W.R."/>
            <person name="Wilson R.K."/>
            <person name="Murphy G."/>
            <person name="Bancroft I."/>
            <person name="Volckaert G."/>
            <person name="Wambutt R."/>
            <person name="Duesterhoeft A."/>
            <person name="Stiekema W."/>
            <person name="Pohl T."/>
            <person name="Entian K.-D."/>
            <person name="Terryn N."/>
            <person name="Hartley N."/>
            <person name="Bent E."/>
            <person name="Johnson S."/>
            <person name="Langham S.-A."/>
            <person name="McCullagh B."/>
            <person name="Robben J."/>
            <person name="Grymonprez B."/>
            <person name="Zimmermann W."/>
            <person name="Ramsperger U."/>
            <person name="Wedler H."/>
            <person name="Balke K."/>
            <person name="Wedler E."/>
            <person name="Peters S."/>
            <person name="van Staveren M."/>
            <person name="Dirkse W."/>
            <person name="Mooijman P."/>
            <person name="Klein Lankhorst R."/>
            <person name="Weitzenegger T."/>
            <person name="Bothe G."/>
            <person name="Rose M."/>
            <person name="Hauf J."/>
            <person name="Berneiser S."/>
            <person name="Hempel S."/>
            <person name="Feldpausch M."/>
            <person name="Lamberth S."/>
            <person name="Villarroel R."/>
            <person name="Gielen J."/>
            <person name="Ardiles W."/>
            <person name="Bents O."/>
            <person name="Lemcke K."/>
            <person name="Kolesov G."/>
            <person name="Mayer K.F.X."/>
            <person name="Rudd S."/>
            <person name="Schoof H."/>
            <person name="Schueller C."/>
            <person name="Zaccaria P."/>
            <person name="Mewes H.-W."/>
            <person name="Bevan M."/>
            <person name="Fransz P.F."/>
        </authorList>
    </citation>
    <scope>NUCLEOTIDE SEQUENCE [LARGE SCALE GENOMIC DNA]</scope>
    <source>
        <strain>cv. Columbia</strain>
    </source>
</reference>
<reference key="2">
    <citation type="journal article" date="2017" name="Plant J.">
        <title>Araport11: a complete reannotation of the Arabidopsis thaliana reference genome.</title>
        <authorList>
            <person name="Cheng C.Y."/>
            <person name="Krishnakumar V."/>
            <person name="Chan A.P."/>
            <person name="Thibaud-Nissen F."/>
            <person name="Schobel S."/>
            <person name="Town C.D."/>
        </authorList>
    </citation>
    <scope>GENOME REANNOTATION</scope>
    <source>
        <strain>cv. Columbia</strain>
    </source>
</reference>
<reference key="3">
    <citation type="submission" date="2006-07" db="EMBL/GenBank/DDBJ databases">
        <title>Large-scale analysis of RIKEN Arabidopsis full-length (RAFL) cDNAs.</title>
        <authorList>
            <person name="Totoki Y."/>
            <person name="Seki M."/>
            <person name="Ishida J."/>
            <person name="Nakajima M."/>
            <person name="Enju A."/>
            <person name="Kamiya A."/>
            <person name="Narusaka M."/>
            <person name="Shin-i T."/>
            <person name="Nakagawa M."/>
            <person name="Sakamoto N."/>
            <person name="Oishi K."/>
            <person name="Kohara Y."/>
            <person name="Kobayashi M."/>
            <person name="Toyoda A."/>
            <person name="Sakaki Y."/>
            <person name="Sakurai T."/>
            <person name="Iida K."/>
            <person name="Akiyama K."/>
            <person name="Satou M."/>
            <person name="Toyoda T."/>
            <person name="Konagaya A."/>
            <person name="Carninci P."/>
            <person name="Kawai J."/>
            <person name="Hayashizaki Y."/>
            <person name="Shinozaki K."/>
        </authorList>
    </citation>
    <scope>NUCLEOTIDE SEQUENCE [LARGE SCALE MRNA]</scope>
    <source>
        <strain>cv. Columbia</strain>
    </source>
</reference>
<reference key="4">
    <citation type="journal article" date="2010" name="Cell Host Microbe">
        <title>Receptor-like cytoplasmic kinases integrate signaling from multiple plant immune receptors and are targeted by a Pseudomonas syringae effector.</title>
        <authorList>
            <person name="Zhang J."/>
            <person name="Li W."/>
            <person name="Xiang T."/>
            <person name="Liu Z."/>
            <person name="Laluk K."/>
            <person name="Ding X."/>
            <person name="Zou Y."/>
            <person name="Gao M."/>
            <person name="Zhang X."/>
            <person name="Chen S."/>
            <person name="Mengiste T."/>
            <person name="Zhang Y."/>
            <person name="Zhou J.M."/>
        </authorList>
    </citation>
    <scope>GENE FAMILY</scope>
    <scope>NOMENCLATURE</scope>
</reference>
<reference key="5">
    <citation type="journal article" date="2011" name="Mol. Cell">
        <title>The CDG1 kinase mediates brassinosteroid signal transduction from BRI1 receptor kinase to BSU1 phosphatase and GSK3-like kinase BIN2.</title>
        <authorList>
            <person name="Kim T.W."/>
            <person name="Guan S."/>
            <person name="Burlingame A.L."/>
            <person name="Wang Z.Y."/>
        </authorList>
    </citation>
    <scope>FUNCTION</scope>
    <scope>INTERACTION WITH BSU1 AND BSL1</scope>
    <scope>SUBCELLULAR LOCATION</scope>
    <scope>TISSUE SPECIFICITY</scope>
    <scope>DISRUPTION PHENOTYPE</scope>
</reference>
<feature type="initiator methionine" description="Removed" evidence="9">
    <location>
        <position position="1"/>
    </location>
</feature>
<feature type="chain" id="PRO_0000431233" description="Probable serine/threonine-protein kinase PBL7">
    <location>
        <begin position="2"/>
        <end position="378"/>
    </location>
</feature>
<feature type="domain" description="Protein kinase" evidence="4">
    <location>
        <begin position="73"/>
        <end position="350"/>
    </location>
</feature>
<feature type="region of interest" description="Disordered" evidence="5">
    <location>
        <begin position="1"/>
        <end position="49"/>
    </location>
</feature>
<feature type="compositionally biased region" description="Basic and acidic residues" evidence="5">
    <location>
        <begin position="18"/>
        <end position="29"/>
    </location>
</feature>
<feature type="compositionally biased region" description="Low complexity" evidence="5">
    <location>
        <begin position="32"/>
        <end position="47"/>
    </location>
</feature>
<feature type="active site" description="Proton acceptor" evidence="4">
    <location>
        <position position="200"/>
    </location>
</feature>
<feature type="binding site" evidence="4">
    <location>
        <begin position="79"/>
        <end position="87"/>
    </location>
    <ligand>
        <name>ATP</name>
        <dbReference type="ChEBI" id="CHEBI:30616"/>
    </ligand>
</feature>
<feature type="binding site" evidence="4">
    <location>
        <position position="102"/>
    </location>
    <ligand>
        <name>ATP</name>
        <dbReference type="ChEBI" id="CHEBI:30616"/>
    </ligand>
</feature>
<feature type="modified residue" description="Phosphothreonine" evidence="1">
    <location>
        <position position="62"/>
    </location>
</feature>
<feature type="modified residue" description="Phosphotyrosine" evidence="1">
    <location>
        <position position="147"/>
    </location>
</feature>
<feature type="modified residue" description="Phosphoserine" evidence="1">
    <location>
        <position position="204"/>
    </location>
</feature>
<feature type="modified residue" description="Phosphoserine" evidence="1">
    <location>
        <position position="234"/>
    </location>
</feature>
<feature type="modified residue" description="Phosphothreonine" evidence="1">
    <location>
        <position position="235"/>
    </location>
</feature>
<feature type="modified residue" description="Phosphothreonine" evidence="1">
    <location>
        <position position="240"/>
    </location>
</feature>
<feature type="modified residue" description="Phosphotyrosine" evidence="1">
    <location>
        <position position="248"/>
    </location>
</feature>
<feature type="lipid moiety-binding region" description="N-myristoyl glycine" evidence="2">
    <location>
        <position position="2"/>
    </location>
</feature>